<organism>
    <name type="scientific">Escherichia coli O127:H6 (strain E2348/69 / EPEC)</name>
    <dbReference type="NCBI Taxonomy" id="574521"/>
    <lineage>
        <taxon>Bacteria</taxon>
        <taxon>Pseudomonadati</taxon>
        <taxon>Pseudomonadota</taxon>
        <taxon>Gammaproteobacteria</taxon>
        <taxon>Enterobacterales</taxon>
        <taxon>Enterobacteriaceae</taxon>
        <taxon>Escherichia</taxon>
    </lineage>
</organism>
<gene>
    <name evidence="1" type="primary">mdtL</name>
    <name type="ordered locus">E2348C_4021</name>
</gene>
<proteinExistence type="inferred from homology"/>
<protein>
    <recommendedName>
        <fullName evidence="1">Multidrug resistance protein MdtL</fullName>
    </recommendedName>
</protein>
<accession>B7UMH7</accession>
<dbReference type="EMBL" id="FM180568">
    <property type="protein sequence ID" value="CAS11569.1"/>
    <property type="molecule type" value="Genomic_DNA"/>
</dbReference>
<dbReference type="RefSeq" id="WP_000085970.1">
    <property type="nucleotide sequence ID" value="NC_011601.1"/>
</dbReference>
<dbReference type="SMR" id="B7UMH7"/>
<dbReference type="KEGG" id="ecg:E2348C_4021"/>
<dbReference type="HOGENOM" id="CLU_001265_47_1_6"/>
<dbReference type="Proteomes" id="UP000008205">
    <property type="component" value="Chromosome"/>
</dbReference>
<dbReference type="GO" id="GO:0005886">
    <property type="term" value="C:plasma membrane"/>
    <property type="evidence" value="ECO:0007669"/>
    <property type="project" value="UniProtKB-SubCell"/>
</dbReference>
<dbReference type="GO" id="GO:0022857">
    <property type="term" value="F:transmembrane transporter activity"/>
    <property type="evidence" value="ECO:0007669"/>
    <property type="project" value="UniProtKB-UniRule"/>
</dbReference>
<dbReference type="GO" id="GO:0046677">
    <property type="term" value="P:response to antibiotic"/>
    <property type="evidence" value="ECO:0007669"/>
    <property type="project" value="UniProtKB-KW"/>
</dbReference>
<dbReference type="CDD" id="cd17320">
    <property type="entry name" value="MFS_MdfA_MDR_like"/>
    <property type="match status" value="1"/>
</dbReference>
<dbReference type="FunFam" id="1.20.1720.10:FF:000003">
    <property type="entry name" value="Multidrug resistance protein MdtL"/>
    <property type="match status" value="1"/>
</dbReference>
<dbReference type="Gene3D" id="1.20.1720.10">
    <property type="entry name" value="Multidrug resistance protein D"/>
    <property type="match status" value="1"/>
</dbReference>
<dbReference type="HAMAP" id="MF_01530">
    <property type="entry name" value="MFS_MdtL"/>
    <property type="match status" value="1"/>
</dbReference>
<dbReference type="InterPro" id="IPR011701">
    <property type="entry name" value="MFS"/>
</dbReference>
<dbReference type="InterPro" id="IPR020846">
    <property type="entry name" value="MFS_dom"/>
</dbReference>
<dbReference type="InterPro" id="IPR050189">
    <property type="entry name" value="MFS_Efflux_Transporters"/>
</dbReference>
<dbReference type="InterPro" id="IPR036259">
    <property type="entry name" value="MFS_trans_sf"/>
</dbReference>
<dbReference type="InterPro" id="IPR023697">
    <property type="entry name" value="Multidrug-R_MdtL"/>
</dbReference>
<dbReference type="NCBIfam" id="NF007782">
    <property type="entry name" value="PRK10473.1"/>
    <property type="match status" value="1"/>
</dbReference>
<dbReference type="PANTHER" id="PTHR43124:SF3">
    <property type="entry name" value="CHLORAMPHENICOL EFFLUX PUMP RV0191"/>
    <property type="match status" value="1"/>
</dbReference>
<dbReference type="PANTHER" id="PTHR43124">
    <property type="entry name" value="PURINE EFFLUX PUMP PBUE"/>
    <property type="match status" value="1"/>
</dbReference>
<dbReference type="Pfam" id="PF07690">
    <property type="entry name" value="MFS_1"/>
    <property type="match status" value="1"/>
</dbReference>
<dbReference type="SUPFAM" id="SSF103473">
    <property type="entry name" value="MFS general substrate transporter"/>
    <property type="match status" value="1"/>
</dbReference>
<dbReference type="PROSITE" id="PS50850">
    <property type="entry name" value="MFS"/>
    <property type="match status" value="1"/>
</dbReference>
<comment type="function">
    <text evidence="1">Confers resistance to chloramphenicol.</text>
</comment>
<comment type="subcellular location">
    <subcellularLocation>
        <location evidence="1">Cell inner membrane</location>
        <topology evidence="1">Multi-pass membrane protein</topology>
    </subcellularLocation>
</comment>
<comment type="similarity">
    <text evidence="1">Belongs to the major facilitator superfamily. DHA1 family. MdtL (TC 2.A.1.2.22) subfamily.</text>
</comment>
<feature type="chain" id="PRO_1000185168" description="Multidrug resistance protein MdtL">
    <location>
        <begin position="1"/>
        <end position="391"/>
    </location>
</feature>
<feature type="transmembrane region" description="Helical" evidence="1">
    <location>
        <begin position="4"/>
        <end position="24"/>
    </location>
</feature>
<feature type="transmembrane region" description="Helical" evidence="1">
    <location>
        <begin position="42"/>
        <end position="62"/>
    </location>
</feature>
<feature type="transmembrane region" description="Helical" evidence="1">
    <location>
        <begin position="69"/>
        <end position="89"/>
    </location>
</feature>
<feature type="transmembrane region" description="Helical" evidence="1">
    <location>
        <begin position="93"/>
        <end position="113"/>
    </location>
</feature>
<feature type="transmembrane region" description="Helical" evidence="1">
    <location>
        <begin position="131"/>
        <end position="151"/>
    </location>
</feature>
<feature type="transmembrane region" description="Helical" evidence="1">
    <location>
        <begin position="158"/>
        <end position="178"/>
    </location>
</feature>
<feature type="transmembrane region" description="Helical" evidence="1">
    <location>
        <begin position="203"/>
        <end position="222"/>
    </location>
</feature>
<feature type="transmembrane region" description="Helical" evidence="1">
    <location>
        <begin position="245"/>
        <end position="265"/>
    </location>
</feature>
<feature type="transmembrane region" description="Helical" evidence="1">
    <location>
        <begin position="269"/>
        <end position="289"/>
    </location>
</feature>
<feature type="transmembrane region" description="Helical" evidence="1">
    <location>
        <begin position="293"/>
        <end position="313"/>
    </location>
</feature>
<feature type="transmembrane region" description="Helical" evidence="1">
    <location>
        <begin position="331"/>
        <end position="351"/>
    </location>
</feature>
<feature type="transmembrane region" description="Helical" evidence="1">
    <location>
        <begin position="356"/>
        <end position="376"/>
    </location>
</feature>
<name>MDTL_ECO27</name>
<reference key="1">
    <citation type="journal article" date="2009" name="J. Bacteriol.">
        <title>Complete genome sequence and comparative genome analysis of enteropathogenic Escherichia coli O127:H6 strain E2348/69.</title>
        <authorList>
            <person name="Iguchi A."/>
            <person name="Thomson N.R."/>
            <person name="Ogura Y."/>
            <person name="Saunders D."/>
            <person name="Ooka T."/>
            <person name="Henderson I.R."/>
            <person name="Harris D."/>
            <person name="Asadulghani M."/>
            <person name="Kurokawa K."/>
            <person name="Dean P."/>
            <person name="Kenny B."/>
            <person name="Quail M.A."/>
            <person name="Thurston S."/>
            <person name="Dougan G."/>
            <person name="Hayashi T."/>
            <person name="Parkhill J."/>
            <person name="Frankel G."/>
        </authorList>
    </citation>
    <scope>NUCLEOTIDE SEQUENCE [LARGE SCALE GENOMIC DNA]</scope>
    <source>
        <strain>E2348/69 / EPEC</strain>
    </source>
</reference>
<keyword id="KW-0046">Antibiotic resistance</keyword>
<keyword id="KW-0997">Cell inner membrane</keyword>
<keyword id="KW-1003">Cell membrane</keyword>
<keyword id="KW-0472">Membrane</keyword>
<keyword id="KW-1185">Reference proteome</keyword>
<keyword id="KW-0812">Transmembrane</keyword>
<keyword id="KW-1133">Transmembrane helix</keyword>
<keyword id="KW-0813">Transport</keyword>
<sequence length="391" mass="41520">MSRFLICSFALVLLYPAGIDMYLVGLPRIAADLNASEAQLHIAFSVYLAGMAAAMLFAGKVADRSGRKPVAIPGAALFIIASVFCSLAETSALFLAGRFLQGLGAGCCYVVAFAILRDTLDDRRRAKVLSLLNGITCIIPVLAPVLGHLIMLKFPWQSLFWTMATMGIAVLMLSLFILKETRPAAPTTSDKPRENSESLLNRFFLSRVVITTLSVSVILTFVNTSPVLLMEIMGFERGEYATIMALTAGVSMTVSFSTPFALGIFKPRTLMITSQVLFLAAGITLAVSPSHAVSLFGITLICAGFSVGFGVAMSQALGPFSLRAGVASSTLGIAQVCGSSLWIWLAAVVGIGAWNMLIGILIACSIVSLLLIMFVAPGRPVAAHEEIHHHA</sequence>
<evidence type="ECO:0000255" key="1">
    <source>
        <dbReference type="HAMAP-Rule" id="MF_01530"/>
    </source>
</evidence>